<accession>D4DGR1</accession>
<keyword id="KW-0064">Aspartyl protease</keyword>
<keyword id="KW-0325">Glycoprotein</keyword>
<keyword id="KW-0378">Hydrolase</keyword>
<keyword id="KW-0645">Protease</keyword>
<keyword id="KW-0964">Secreted</keyword>
<keyword id="KW-0732">Signal</keyword>
<keyword id="KW-0843">Virulence</keyword>
<keyword id="KW-0865">Zymogen</keyword>
<feature type="signal peptide" evidence="2">
    <location>
        <begin position="1"/>
        <end position="17"/>
    </location>
</feature>
<feature type="propeptide" id="PRO_0000397716" description="Activation peptide" evidence="1">
    <location>
        <begin position="18"/>
        <end position="87"/>
    </location>
</feature>
<feature type="chain" id="PRO_0000397717" description="Probable aspartic-type endopeptidase TRV_06366">
    <location>
        <begin position="88"/>
        <end position="430"/>
    </location>
</feature>
<feature type="domain" description="Peptidase A1" evidence="3">
    <location>
        <begin position="109"/>
        <end position="427"/>
    </location>
</feature>
<feature type="region of interest" description="Disordered" evidence="5">
    <location>
        <begin position="61"/>
        <end position="104"/>
    </location>
</feature>
<feature type="compositionally biased region" description="Basic and acidic residues" evidence="5">
    <location>
        <begin position="87"/>
        <end position="104"/>
    </location>
</feature>
<feature type="active site" evidence="4">
    <location>
        <position position="125"/>
    </location>
</feature>
<feature type="active site" evidence="4">
    <location>
        <position position="314"/>
    </location>
</feature>
<feature type="glycosylation site" description="N-linked (GlcNAc...) asparagine" evidence="2">
    <location>
        <position position="306"/>
    </location>
</feature>
<reference key="1">
    <citation type="journal article" date="2011" name="Genome Biol.">
        <title>Comparative and functional genomics provide insights into the pathogenicity of dermatophytic fungi.</title>
        <authorList>
            <person name="Burmester A."/>
            <person name="Shelest E."/>
            <person name="Gloeckner G."/>
            <person name="Heddergott C."/>
            <person name="Schindler S."/>
            <person name="Staib P."/>
            <person name="Heidel A."/>
            <person name="Felder M."/>
            <person name="Petzold A."/>
            <person name="Szafranski K."/>
            <person name="Feuermann M."/>
            <person name="Pedruzzi I."/>
            <person name="Priebe S."/>
            <person name="Groth M."/>
            <person name="Winkler R."/>
            <person name="Li W."/>
            <person name="Kniemeyer O."/>
            <person name="Schroeckh V."/>
            <person name="Hertweck C."/>
            <person name="Hube B."/>
            <person name="White T.C."/>
            <person name="Platzer M."/>
            <person name="Guthke R."/>
            <person name="Heitman J."/>
            <person name="Woestemeyer J."/>
            <person name="Zipfel P.F."/>
            <person name="Monod M."/>
            <person name="Brakhage A.A."/>
        </authorList>
    </citation>
    <scope>NUCLEOTIDE SEQUENCE [LARGE SCALE GENOMIC DNA]</scope>
    <source>
        <strain>HKI 0517</strain>
    </source>
</reference>
<proteinExistence type="inferred from homology"/>
<protein>
    <recommendedName>
        <fullName>Probable aspartic-type endopeptidase TRV_06366</fullName>
        <ecNumber>3.4.23.-</ecNumber>
    </recommendedName>
</protein>
<organism>
    <name type="scientific">Trichophyton verrucosum (strain HKI 0517)</name>
    <dbReference type="NCBI Taxonomy" id="663202"/>
    <lineage>
        <taxon>Eukaryota</taxon>
        <taxon>Fungi</taxon>
        <taxon>Dikarya</taxon>
        <taxon>Ascomycota</taxon>
        <taxon>Pezizomycotina</taxon>
        <taxon>Eurotiomycetes</taxon>
        <taxon>Eurotiomycetidae</taxon>
        <taxon>Onygenales</taxon>
        <taxon>Arthrodermataceae</taxon>
        <taxon>Trichophyton</taxon>
    </lineage>
</organism>
<sequence length="430" mass="46757">MHVSTLLVAVLLPLALSKPTPRKKTSSFKVHLARRGETEYYRDGPTDLQRAYAKYGIPTTHEMEGYHPQPISKLPGNSKATAGSGKEGVESQDEKGEVVNNPTDHDIQFLSPVTIGGQPFIMNFDTGSSDTWVMNTQMTDEEAKKDHHLYDPSKSKTASKLVDQNFDIKYGDKTHASGPVYSDVMDIGGATVRNQAIGLPSKVAASLAEDKTSDGLVGLAMTKLNTIRPVKQKTFFENLAEDLDEPVFTAQLRHGKMGSYEFGAIDKSKYHGDLIKVPVINENGFWEIPCSLYSVGKLDKIQTIQNGTGTAILDTGTTLLVLDEKIVKAYYAQVPGARYDPTRFAGWVYPCNSPMPSLFLAVGTDHMAIIPSSLLTFQSYGPGPDGVETCYGGLQSNNAGGIQILGDVFFKALFVVFDQRGPSISLAPHA</sequence>
<dbReference type="EC" id="3.4.23.-"/>
<dbReference type="EMBL" id="ACYE01000362">
    <property type="protein sequence ID" value="EFE38962.1"/>
    <property type="molecule type" value="Genomic_DNA"/>
</dbReference>
<dbReference type="RefSeq" id="XP_003019607.1">
    <property type="nucleotide sequence ID" value="XM_003019561.1"/>
</dbReference>
<dbReference type="SMR" id="D4DGR1"/>
<dbReference type="MEROPS" id="A01.079"/>
<dbReference type="GeneID" id="9578379"/>
<dbReference type="KEGG" id="tve:TRV_06366"/>
<dbReference type="HOGENOM" id="CLU_013253_0_0_1"/>
<dbReference type="OrthoDB" id="1374at34384"/>
<dbReference type="Proteomes" id="UP000008383">
    <property type="component" value="Unassembled WGS sequence"/>
</dbReference>
<dbReference type="GO" id="GO:0005576">
    <property type="term" value="C:extracellular region"/>
    <property type="evidence" value="ECO:0007669"/>
    <property type="project" value="UniProtKB-SubCell"/>
</dbReference>
<dbReference type="GO" id="GO:0004190">
    <property type="term" value="F:aspartic-type endopeptidase activity"/>
    <property type="evidence" value="ECO:0007669"/>
    <property type="project" value="UniProtKB-KW"/>
</dbReference>
<dbReference type="GO" id="GO:0006508">
    <property type="term" value="P:proteolysis"/>
    <property type="evidence" value="ECO:0007669"/>
    <property type="project" value="UniProtKB-KW"/>
</dbReference>
<dbReference type="CDD" id="cd06097">
    <property type="entry name" value="Aspergillopepsin_like"/>
    <property type="match status" value="1"/>
</dbReference>
<dbReference type="FunFam" id="2.40.70.10:FF:000026">
    <property type="entry name" value="Endothiapepsin"/>
    <property type="match status" value="1"/>
</dbReference>
<dbReference type="Gene3D" id="2.40.70.10">
    <property type="entry name" value="Acid Proteases"/>
    <property type="match status" value="2"/>
</dbReference>
<dbReference type="InterPro" id="IPR001461">
    <property type="entry name" value="Aspartic_peptidase_A1"/>
</dbReference>
<dbReference type="InterPro" id="IPR001969">
    <property type="entry name" value="Aspartic_peptidase_AS"/>
</dbReference>
<dbReference type="InterPro" id="IPR034163">
    <property type="entry name" value="Aspergillopepsin-like_cat_dom"/>
</dbReference>
<dbReference type="InterPro" id="IPR033121">
    <property type="entry name" value="PEPTIDASE_A1"/>
</dbReference>
<dbReference type="InterPro" id="IPR021109">
    <property type="entry name" value="Peptidase_aspartic_dom_sf"/>
</dbReference>
<dbReference type="PANTHER" id="PTHR47966:SF23">
    <property type="entry name" value="ASPARTIC ENDOPEPTIDASE, PUTATIVE (AFU_ORTHOLOGUE AFUA_2G15950)-RELATED"/>
    <property type="match status" value="1"/>
</dbReference>
<dbReference type="PANTHER" id="PTHR47966">
    <property type="entry name" value="BETA-SITE APP-CLEAVING ENZYME, ISOFORM A-RELATED"/>
    <property type="match status" value="1"/>
</dbReference>
<dbReference type="Pfam" id="PF00026">
    <property type="entry name" value="Asp"/>
    <property type="match status" value="1"/>
</dbReference>
<dbReference type="PRINTS" id="PR00792">
    <property type="entry name" value="PEPSIN"/>
</dbReference>
<dbReference type="SUPFAM" id="SSF50630">
    <property type="entry name" value="Acid proteases"/>
    <property type="match status" value="1"/>
</dbReference>
<dbReference type="PROSITE" id="PS00141">
    <property type="entry name" value="ASP_PROTEASE"/>
    <property type="match status" value="2"/>
</dbReference>
<dbReference type="PROSITE" id="PS51767">
    <property type="entry name" value="PEPTIDASE_A1"/>
    <property type="match status" value="1"/>
</dbReference>
<evidence type="ECO:0000250" key="1"/>
<evidence type="ECO:0000255" key="2"/>
<evidence type="ECO:0000255" key="3">
    <source>
        <dbReference type="PROSITE-ProRule" id="PRU01103"/>
    </source>
</evidence>
<evidence type="ECO:0000255" key="4">
    <source>
        <dbReference type="PROSITE-ProRule" id="PRU10094"/>
    </source>
</evidence>
<evidence type="ECO:0000256" key="5">
    <source>
        <dbReference type="SAM" id="MobiDB-lite"/>
    </source>
</evidence>
<evidence type="ECO:0000305" key="6"/>
<comment type="function">
    <text evidence="1">Probable secreted aspartic-type endopeptidase which contributes to virulence.</text>
</comment>
<comment type="subcellular location">
    <subcellularLocation>
        <location evidence="1">Secreted</location>
    </subcellularLocation>
</comment>
<comment type="similarity">
    <text evidence="6">Belongs to the peptidase A1 family.</text>
</comment>
<gene>
    <name type="ORF">TRV_06366</name>
</gene>
<name>Y6366_TRIVH</name>